<protein>
    <recommendedName>
        <fullName evidence="8">Cytotoxic granule-associated RNA binding protein tiar-1</fullName>
    </recommendedName>
    <alternativeName>
        <fullName evidence="10">TIA1/TIAL RNA-binding protein homolog</fullName>
    </alternativeName>
</protein>
<dbReference type="EMBL" id="BX284602">
    <property type="protein sequence ID" value="CCD65015.1"/>
    <property type="molecule type" value="Genomic_DNA"/>
</dbReference>
<dbReference type="RefSeq" id="NP_495121.1">
    <property type="nucleotide sequence ID" value="NM_062720.4"/>
</dbReference>
<dbReference type="SMR" id="Q95QV8"/>
<dbReference type="FunCoup" id="Q95QV8">
    <property type="interactions" value="3508"/>
</dbReference>
<dbReference type="IntAct" id="Q95QV8">
    <property type="interactions" value="1"/>
</dbReference>
<dbReference type="STRING" id="6239.C18A3.5a.1"/>
<dbReference type="PaxDb" id="6239-C18A3.5a"/>
<dbReference type="PeptideAtlas" id="Q95QV8"/>
<dbReference type="EnsemblMetazoa" id="C18A3.5a.1">
    <property type="protein sequence ID" value="C18A3.5a.1"/>
    <property type="gene ID" value="WBGene00015943"/>
</dbReference>
<dbReference type="GeneID" id="173967"/>
<dbReference type="KEGG" id="cel:CELE_C18A3.5"/>
<dbReference type="UCSC" id="C18A3.5f.1">
    <property type="organism name" value="c. elegans"/>
</dbReference>
<dbReference type="AGR" id="WB:WBGene00015943"/>
<dbReference type="CTD" id="173967"/>
<dbReference type="WormBase" id="C18A3.5a">
    <property type="protein sequence ID" value="CE27708"/>
    <property type="gene ID" value="WBGene00015943"/>
    <property type="gene designation" value="tiar-1"/>
</dbReference>
<dbReference type="eggNOG" id="KOG0148">
    <property type="taxonomic scope" value="Eukaryota"/>
</dbReference>
<dbReference type="HOGENOM" id="CLU_025000_2_0_1"/>
<dbReference type="InParanoid" id="Q95QV8"/>
<dbReference type="OMA" id="VRIFKMQ"/>
<dbReference type="OrthoDB" id="439808at2759"/>
<dbReference type="PhylomeDB" id="Q95QV8"/>
<dbReference type="CD-CODE" id="73A75392">
    <property type="entry name" value="P-granule"/>
</dbReference>
<dbReference type="Proteomes" id="UP000001940">
    <property type="component" value="Chromosome II"/>
</dbReference>
<dbReference type="Bgee" id="WBGene00015943">
    <property type="expression patterns" value="Expressed in pharyngeal muscle cell (C elegans) and 4 other cell types or tissues"/>
</dbReference>
<dbReference type="ExpressionAtlas" id="Q95QV8">
    <property type="expression patterns" value="baseline and differential"/>
</dbReference>
<dbReference type="GO" id="GO:0005737">
    <property type="term" value="C:cytoplasm"/>
    <property type="evidence" value="ECO:0000314"/>
    <property type="project" value="WormBase"/>
</dbReference>
<dbReference type="GO" id="GO:0010494">
    <property type="term" value="C:cytoplasmic stress granule"/>
    <property type="evidence" value="ECO:0000314"/>
    <property type="project" value="WormBase"/>
</dbReference>
<dbReference type="GO" id="GO:0005634">
    <property type="term" value="C:nucleus"/>
    <property type="evidence" value="ECO:0000314"/>
    <property type="project" value="WormBase"/>
</dbReference>
<dbReference type="GO" id="GO:0043186">
    <property type="term" value="C:P granule"/>
    <property type="evidence" value="ECO:0000314"/>
    <property type="project" value="WormBase"/>
</dbReference>
<dbReference type="GO" id="GO:0003729">
    <property type="term" value="F:mRNA binding"/>
    <property type="evidence" value="ECO:0000318"/>
    <property type="project" value="GO_Central"/>
</dbReference>
<dbReference type="GO" id="GO:0008340">
    <property type="term" value="P:determination of adult lifespan"/>
    <property type="evidence" value="ECO:0000315"/>
    <property type="project" value="WormBase"/>
</dbReference>
<dbReference type="GO" id="GO:0002119">
    <property type="term" value="P:nematode larval development"/>
    <property type="evidence" value="ECO:0000315"/>
    <property type="project" value="WormBase"/>
</dbReference>
<dbReference type="GO" id="GO:0000184">
    <property type="term" value="P:nuclear-transcribed mRNA catabolic process, nonsense-mediated decay"/>
    <property type="evidence" value="ECO:0000318"/>
    <property type="project" value="GO_Central"/>
</dbReference>
<dbReference type="GO" id="GO:0040012">
    <property type="term" value="P:regulation of locomotion"/>
    <property type="evidence" value="ECO:0000315"/>
    <property type="project" value="WormBase"/>
</dbReference>
<dbReference type="GO" id="GO:0043488">
    <property type="term" value="P:regulation of mRNA stability"/>
    <property type="evidence" value="ECO:0000318"/>
    <property type="project" value="GO_Central"/>
</dbReference>
<dbReference type="GO" id="GO:0022414">
    <property type="term" value="P:reproductive process"/>
    <property type="evidence" value="ECO:0000315"/>
    <property type="project" value="WormBase"/>
</dbReference>
<dbReference type="GO" id="GO:0006979">
    <property type="term" value="P:response to oxidative stress"/>
    <property type="evidence" value="ECO:0000315"/>
    <property type="project" value="WormBase"/>
</dbReference>
<dbReference type="GO" id="GO:0009411">
    <property type="term" value="P:response to UV"/>
    <property type="evidence" value="ECO:0000315"/>
    <property type="project" value="WormBase"/>
</dbReference>
<dbReference type="GO" id="GO:0034063">
    <property type="term" value="P:stress granule assembly"/>
    <property type="evidence" value="ECO:0000318"/>
    <property type="project" value="GO_Central"/>
</dbReference>
<dbReference type="CDD" id="cd12352">
    <property type="entry name" value="RRM1_TIA1_like"/>
    <property type="match status" value="1"/>
</dbReference>
<dbReference type="CDD" id="cd12353">
    <property type="entry name" value="RRM2_TIA1_like"/>
    <property type="match status" value="1"/>
</dbReference>
<dbReference type="CDD" id="cd12354">
    <property type="entry name" value="RRM3_TIA1_like"/>
    <property type="match status" value="1"/>
</dbReference>
<dbReference type="FunFam" id="3.30.70.330:FF:000765">
    <property type="entry name" value="RNA-binding protein TIA-1, putative"/>
    <property type="match status" value="1"/>
</dbReference>
<dbReference type="FunFam" id="3.30.70.330:FF:001013">
    <property type="entry name" value="TIA-1/TIAL RNA binding protein homolog"/>
    <property type="match status" value="1"/>
</dbReference>
<dbReference type="FunFam" id="3.30.70.330:FF:001192">
    <property type="entry name" value="TIA-1/TIAL RNA binding protein homolog"/>
    <property type="match status" value="1"/>
</dbReference>
<dbReference type="Gene3D" id="3.30.70.330">
    <property type="match status" value="3"/>
</dbReference>
<dbReference type="InterPro" id="IPR012677">
    <property type="entry name" value="Nucleotide-bd_a/b_plait_sf"/>
</dbReference>
<dbReference type="InterPro" id="IPR035979">
    <property type="entry name" value="RBD_domain_sf"/>
</dbReference>
<dbReference type="InterPro" id="IPR050825">
    <property type="entry name" value="RBM42_RBP45_47-like"/>
</dbReference>
<dbReference type="InterPro" id="IPR000504">
    <property type="entry name" value="RRM_dom"/>
</dbReference>
<dbReference type="InterPro" id="IPR003954">
    <property type="entry name" value="RRM_dom_euk"/>
</dbReference>
<dbReference type="PANTHER" id="PTHR47640:SF5">
    <property type="entry name" value="RRM DOMAIN-CONTAINING PROTEIN"/>
    <property type="match status" value="1"/>
</dbReference>
<dbReference type="PANTHER" id="PTHR47640">
    <property type="entry name" value="TRNA SELENOCYSTEINE 1-ASSOCIATED PROTEIN 1-RELATED-RELATED"/>
    <property type="match status" value="1"/>
</dbReference>
<dbReference type="Pfam" id="PF00076">
    <property type="entry name" value="RRM_1"/>
    <property type="match status" value="3"/>
</dbReference>
<dbReference type="SMART" id="SM00360">
    <property type="entry name" value="RRM"/>
    <property type="match status" value="3"/>
</dbReference>
<dbReference type="SMART" id="SM00361">
    <property type="entry name" value="RRM_1"/>
    <property type="match status" value="3"/>
</dbReference>
<dbReference type="SUPFAM" id="SSF54928">
    <property type="entry name" value="RNA-binding domain, RBD"/>
    <property type="match status" value="2"/>
</dbReference>
<dbReference type="PROSITE" id="PS50102">
    <property type="entry name" value="RRM"/>
    <property type="match status" value="3"/>
</dbReference>
<comment type="function">
    <text evidence="2 3 4 5 6">Acts downstream of ced-9 in the induction of germline apoptosis under different stress conditions including starvation, osmotic, oxidative, heat shock and UV stress (PubMed:23913578). Plays a role in the formation of stress granules in response to heat shock and oxidative stress but not in response to osmotic stress (PubMed:25061667, PubMed:32432401). Required for the formation of stress granules in the core gonad but may not play a critical role in this process in the oocytes (PubMed:26865701). Plays an important role in the formation of stress granules in the embryo (PubMed:34661238). Protects female germ cells and embryos from heat shock (PubMed:26865701).</text>
</comment>
<comment type="subcellular location">
    <subcellularLocation>
        <location evidence="3 4 5 6">Cytoplasm</location>
    </subcellularLocation>
    <subcellularLocation>
        <location evidence="2 3 4 6">Nucleus</location>
    </subcellularLocation>
    <subcellularLocation>
        <location evidence="3 4 5 6 7">Cytoplasm</location>
        <location evidence="3 4 5 6 7">Stress granule</location>
    </subcellularLocation>
    <text evidence="3 4 5">Diffusely cytoplasmic but localizes to stress granules in response to stress (PubMed:25061667, PubMed:26865701). Also detected in the nucleus (PubMed:25061667, PubMed:26865701). Heat shock stress granules are larger and more abundant than those caused by starvation (PubMed:26865701). Gonad stress granules form before, and dissociate after, those in the oocytes (PubMed:26865701). Pretreatment at 24 degrees Celsius results in smaller gonad stress granules and does not affect those formed in the oocytes (PubMed:26865701). Located in stress granules in the intestine in response to heat shock, starvation and dietary restriction (PubMed:32432401). Requires gtbp-1 and hsf-1 to localize to stress granules (PubMed:32432401).</text>
</comment>
<comment type="tissue specificity">
    <text evidence="2 3 4 5">Expressed in the germline and also in somatic tissues (PubMed:23913578). Expressed in Ggonads and oocytes (PubMed:23913578, PubMed:26865701). Expression is slightly reduced in the most proximal oocytes, especially the -1 oocyte (PubMed:23913578). Aggregates mostly in the head neurons, muscles, intestine, vulval and hypodermal cells during heat shock (PubMed:25061667). Expressed only in the intestine as a response to heat shock, starvation and dietary restriction (PubMed:32432401).</text>
</comment>
<comment type="disruption phenotype">
    <text evidence="3 4">Reduced lifespan, impaired stress response, delayed development, reduced brood size and an early behavioral decline with uncoordinated locomotion at 6 days of adulthood (PubMed:25061667). Have smaller brood size and 10% embryonic lethality at 20 degrees Celsius (PubMed:26865701). Produces 2 to 35-fold excess males at 20 and 25 degrees Celsius, probably due to increased X-chromosome non-disjunction during oogenesis (PubMed:26865701). Shows impaired heat-shock response: only a 3-fold increase in phsp-16.2 expression (thermotolerance biomarker) when heat-shocked compared to a 10-fold increase in wild-type animals (PubMed:26865701).</text>
</comment>
<reference evidence="9" key="1">
    <citation type="journal article" date="1998" name="Science">
        <title>Genome sequence of the nematode C. elegans: a platform for investigating biology.</title>
        <authorList>
            <consortium name="The C. elegans sequencing consortium"/>
        </authorList>
    </citation>
    <scope>NUCLEOTIDE SEQUENCE [LARGE SCALE GENOMIC DNA]</scope>
    <source>
        <strain evidence="9">Bristol N2</strain>
    </source>
</reference>
<reference evidence="8" key="2">
    <citation type="journal article" date="2013" name="Genesis">
        <title>The C. elegans TIA-1/TIAR homolog TIAR-1 is required to induce germ cell apoptosis.</title>
        <authorList>
            <person name="Silva-Garcia C.G."/>
            <person name="Estela Navarro R."/>
        </authorList>
    </citation>
    <scope>FUNCTION</scope>
    <scope>SUBCELLULAR LOCATION</scope>
    <scope>TISSUE SPECIFICITY</scope>
</reference>
<reference evidence="8" key="3">
    <citation type="journal article" date="2014" name="PLoS ONE">
        <title>Diverse functions of mRNA metabolism factors in stress defense and aging of Caenorhabditis elegans.</title>
        <authorList>
            <person name="Rousakis A."/>
            <person name="Vlanti A."/>
            <person name="Borbolis F."/>
            <person name="Roumelioti F."/>
            <person name="Kapetanou M."/>
            <person name="Syntichaki P."/>
        </authorList>
    </citation>
    <scope>FUNCTION</scope>
    <scope>SUBCELLULAR LOCATION</scope>
    <scope>TISSUE SPECIFICITY</scope>
    <scope>DISRUPTION PHENOTYPE</scope>
</reference>
<reference evidence="8" key="4">
    <citation type="journal article" date="2016" name="G3 (Bethesda)">
        <title>The Stress Granule RNA-Binding Protein TIAR-1 Protects Female Germ Cells from Heat Shock in Caenorhabditis elegans.</title>
        <authorList>
            <person name="Huelgas-Morales G."/>
            <person name="Silva-Garcia C.G."/>
            <person name="Salinas L.S."/>
            <person name="Greenstein D."/>
            <person name="Navarro R.E."/>
        </authorList>
    </citation>
    <scope>FUNCTION</scope>
    <scope>SUBCELLULAR LOCATION</scope>
    <scope>TISSUE SPECIFICITY</scope>
    <scope>DISRUPTION PHENOTYPE</scope>
</reference>
<reference evidence="8" key="5">
    <citation type="journal article" date="2020" name="Aging Cell">
        <title>AMPK-mediated formation of stress granules is required for dietary restriction-induced longevity in Caenorhabditis elegans.</title>
        <authorList>
            <person name="Kuo C.T."/>
            <person name="You G.T."/>
            <person name="Jian Y.J."/>
            <person name="Chen T.S."/>
            <person name="Siao Y.C."/>
            <person name="Hsu A.L."/>
            <person name="Ching T.T."/>
        </authorList>
    </citation>
    <scope>FUNCTION</scope>
    <scope>SUBCELLULAR LOCATION</scope>
    <scope>TISSUE SPECIFICITY</scope>
</reference>
<reference evidence="8" key="6">
    <citation type="journal article" date="2021" name="J. Cell Sci.">
        <title>PQN-59 and GTBP-1 contribute to stress granule formation but are not essential for their assembly in C. elegans embryos.</title>
        <authorList>
            <person name="Abbatemarco S."/>
            <person name="Bondaz A."/>
            <person name="Schwager F."/>
            <person name="Wang J."/>
            <person name="Hammell C.M."/>
            <person name="Gotta M."/>
        </authorList>
    </citation>
    <scope>FUNCTION</scope>
    <scope>SUBCELLULAR LOCATION</scope>
</reference>
<reference evidence="8" key="7">
    <citation type="journal article" date="2023" name="Front. Cell Dev. Biol.">
        <title>Two predicted alpha-helices within the prion-like domain of TIAR-1 play a crucial role in its association with stress granules in Caenorhabditis elegans.</title>
        <authorList>
            <person name="Fuentes-Jimenez D.A."/>
            <person name="Salinas L.S."/>
            <person name="Morales-Oliva E."/>
            <person name="Ramirez-Ramirez V.A."/>
            <person name="Arciniega M."/>
            <person name="Navarro R.E."/>
        </authorList>
    </citation>
    <scope>SUBCELLULAR LOCATION</scope>
    <scope>MUTAGENESIS OF 369-SER--GLN-393</scope>
</reference>
<gene>
    <name evidence="10" type="primary">tiar-1</name>
    <name evidence="10" type="ORF">C18A3.5</name>
</gene>
<organism evidence="9">
    <name type="scientific">Caenorhabditis elegans</name>
    <dbReference type="NCBI Taxonomy" id="6239"/>
    <lineage>
        <taxon>Eukaryota</taxon>
        <taxon>Metazoa</taxon>
        <taxon>Ecdysozoa</taxon>
        <taxon>Nematoda</taxon>
        <taxon>Chromadorea</taxon>
        <taxon>Rhabditida</taxon>
        <taxon>Rhabditina</taxon>
        <taxon>Rhabditomorpha</taxon>
        <taxon>Rhabditoidea</taxon>
        <taxon>Rhabditidae</taxon>
        <taxon>Peloderinae</taxon>
        <taxon>Caenorhabditis</taxon>
    </lineage>
</organism>
<keyword id="KW-0963">Cytoplasm</keyword>
<keyword id="KW-0539">Nucleus</keyword>
<keyword id="KW-1185">Reference proteome</keyword>
<keyword id="KW-0677">Repeat</keyword>
<keyword id="KW-0694">RNA-binding</keyword>
<keyword id="KW-0346">Stress response</keyword>
<name>TIAR1_CAEEL</name>
<feature type="chain" id="PRO_0000460718" description="Cytotoxic granule-associated RNA binding protein tiar-1">
    <location>
        <begin position="1"/>
        <end position="408"/>
    </location>
</feature>
<feature type="domain" description="RRM 1" evidence="1">
    <location>
        <begin position="46"/>
        <end position="121"/>
    </location>
</feature>
<feature type="domain" description="RRM 2" evidence="1">
    <location>
        <begin position="135"/>
        <end position="213"/>
    </location>
</feature>
<feature type="domain" description="RRM 3" evidence="1">
    <location>
        <begin position="241"/>
        <end position="312"/>
    </location>
</feature>
<feature type="mutagenesis site" description="Increased dispersion and reduced organization and stability of stress granules in gonads. Decreased brood size, increased embryonic lethality and decreased lifespan." evidence="7">
    <original>SQYWQYYAQYYNNPQLMQQWSNYWQ</original>
    <variation>PQYWPYYAPYYNNPQLMPQWPNYWP</variation>
    <location>
        <begin position="369"/>
        <end position="393"/>
    </location>
</feature>
<evidence type="ECO:0000255" key="1">
    <source>
        <dbReference type="PROSITE-ProRule" id="PRU00176"/>
    </source>
</evidence>
<evidence type="ECO:0000269" key="2">
    <source>
    </source>
</evidence>
<evidence type="ECO:0000269" key="3">
    <source>
    </source>
</evidence>
<evidence type="ECO:0000269" key="4">
    <source>
    </source>
</evidence>
<evidence type="ECO:0000269" key="5">
    <source>
    </source>
</evidence>
<evidence type="ECO:0000269" key="6">
    <source>
    </source>
</evidence>
<evidence type="ECO:0000269" key="7">
    <source>
    </source>
</evidence>
<evidence type="ECO:0000305" key="8"/>
<evidence type="ECO:0000312" key="9">
    <source>
        <dbReference type="Proteomes" id="UP000001940"/>
    </source>
</evidence>
<evidence type="ECO:0000312" key="10">
    <source>
        <dbReference type="WormBase" id="C18A3.5a"/>
    </source>
</evidence>
<accession>Q95QV8</accession>
<sequence length="408" mass="45187">MSFFNPPANSNHGYNDDVNTGYNARMHSKLAEREGFHLGNGSDEPRTLYVGNLDSTVTEDFIATLFNQIGSVTKTKVIFDGSNDPYAFVEFSDHGQASQALQTMNKRLLLDREMKVNWAVEPGQQQSKIDTTRHFHVFVGDLSSEVDNQKLREAFQPFGDVSDAKVIRDTNTTKSKGYGFVSYPKREEAERAIEQMNGQWLGRRTIRTNWATRKPGDQEKPSHYNEKSYDEIYNQTSGDNTSVYVGNIASLTEDEIRQGFASFGRITEVRIFKMQGYAFVKFDNKDAAAKAIVQMNNQDVGGQLVRCSWGKTGDTGKTPGGSYGYGYGNSSSGGNSQPYSGYGGGGAYGGGQGGGGHGGPGQQQSNANSQYWQYYAQYYNNPQLMQQWSNYWQQQGGAPQQQNSGGHQ</sequence>
<proteinExistence type="evidence at protein level"/>